<comment type="catalytic activity">
    <reaction evidence="1">
        <text>1-(2-carboxyphenylamino)-1-deoxy-D-ribulose 5-phosphate + H(+) = (1S,2R)-1-C-(indol-3-yl)glycerol 3-phosphate + CO2 + H2O</text>
        <dbReference type="Rhea" id="RHEA:23476"/>
        <dbReference type="ChEBI" id="CHEBI:15377"/>
        <dbReference type="ChEBI" id="CHEBI:15378"/>
        <dbReference type="ChEBI" id="CHEBI:16526"/>
        <dbReference type="ChEBI" id="CHEBI:58613"/>
        <dbReference type="ChEBI" id="CHEBI:58866"/>
        <dbReference type="EC" id="4.1.1.48"/>
    </reaction>
</comment>
<comment type="pathway">
    <text evidence="1">Amino-acid biosynthesis; L-tryptophan biosynthesis; L-tryptophan from chorismate: step 4/5.</text>
</comment>
<comment type="similarity">
    <text evidence="1">Belongs to the TrpC family.</text>
</comment>
<protein>
    <recommendedName>
        <fullName evidence="1">Indole-3-glycerol phosphate synthase</fullName>
        <shortName evidence="1">IGPS</shortName>
        <ecNumber evidence="1">4.1.1.48</ecNumber>
    </recommendedName>
</protein>
<gene>
    <name evidence="1" type="primary">trpC</name>
    <name type="ordered locus">BA_1251</name>
    <name type="ordered locus">GBAA_1251</name>
    <name type="ordered locus">BAS1159</name>
</gene>
<organism>
    <name type="scientific">Bacillus anthracis</name>
    <dbReference type="NCBI Taxonomy" id="1392"/>
    <lineage>
        <taxon>Bacteria</taxon>
        <taxon>Bacillati</taxon>
        <taxon>Bacillota</taxon>
        <taxon>Bacilli</taxon>
        <taxon>Bacillales</taxon>
        <taxon>Bacillaceae</taxon>
        <taxon>Bacillus</taxon>
        <taxon>Bacillus cereus group</taxon>
    </lineage>
</organism>
<accession>Q81TM0</accession>
<accession>Q6I1V0</accession>
<accession>Q6KVP2</accession>
<evidence type="ECO:0000255" key="1">
    <source>
        <dbReference type="HAMAP-Rule" id="MF_00134"/>
    </source>
</evidence>
<dbReference type="EC" id="4.1.1.48" evidence="1"/>
<dbReference type="EMBL" id="AE016879">
    <property type="protein sequence ID" value="AAP25209.1"/>
    <property type="molecule type" value="Genomic_DNA"/>
</dbReference>
<dbReference type="EMBL" id="AE017334">
    <property type="protein sequence ID" value="AAT30341.1"/>
    <property type="molecule type" value="Genomic_DNA"/>
</dbReference>
<dbReference type="EMBL" id="AE017225">
    <property type="protein sequence ID" value="AAT53481.1"/>
    <property type="molecule type" value="Genomic_DNA"/>
</dbReference>
<dbReference type="RefSeq" id="NP_843723.1">
    <property type="nucleotide sequence ID" value="NC_003997.3"/>
</dbReference>
<dbReference type="RefSeq" id="WP_000536721.1">
    <property type="nucleotide sequence ID" value="NZ_WXXJ01000020.1"/>
</dbReference>
<dbReference type="RefSeq" id="YP_027430.1">
    <property type="nucleotide sequence ID" value="NC_005945.1"/>
</dbReference>
<dbReference type="SMR" id="Q81TM0"/>
<dbReference type="STRING" id="261594.GBAA_1251"/>
<dbReference type="DNASU" id="1085544"/>
<dbReference type="GeneID" id="45021251"/>
<dbReference type="KEGG" id="ban:BA_1251"/>
<dbReference type="KEGG" id="banh:HYU01_06415"/>
<dbReference type="KEGG" id="bar:GBAA_1251"/>
<dbReference type="KEGG" id="bat:BAS1159"/>
<dbReference type="PATRIC" id="fig|198094.11.peg.1227"/>
<dbReference type="eggNOG" id="COG0134">
    <property type="taxonomic scope" value="Bacteria"/>
</dbReference>
<dbReference type="HOGENOM" id="CLU_034247_2_0_9"/>
<dbReference type="OMA" id="RGPHDLI"/>
<dbReference type="OrthoDB" id="9804217at2"/>
<dbReference type="UniPathway" id="UPA00035">
    <property type="reaction ID" value="UER00043"/>
</dbReference>
<dbReference type="Proteomes" id="UP000000427">
    <property type="component" value="Chromosome"/>
</dbReference>
<dbReference type="Proteomes" id="UP000000594">
    <property type="component" value="Chromosome"/>
</dbReference>
<dbReference type="GO" id="GO:0004425">
    <property type="term" value="F:indole-3-glycerol-phosphate synthase activity"/>
    <property type="evidence" value="ECO:0007669"/>
    <property type="project" value="UniProtKB-UniRule"/>
</dbReference>
<dbReference type="GO" id="GO:0004640">
    <property type="term" value="F:phosphoribosylanthranilate isomerase activity"/>
    <property type="evidence" value="ECO:0007669"/>
    <property type="project" value="TreeGrafter"/>
</dbReference>
<dbReference type="GO" id="GO:0000162">
    <property type="term" value="P:L-tryptophan biosynthetic process"/>
    <property type="evidence" value="ECO:0007669"/>
    <property type="project" value="UniProtKB-UniRule"/>
</dbReference>
<dbReference type="CDD" id="cd00331">
    <property type="entry name" value="IGPS"/>
    <property type="match status" value="1"/>
</dbReference>
<dbReference type="FunFam" id="3.20.20.70:FF:000024">
    <property type="entry name" value="Indole-3-glycerol phosphate synthase"/>
    <property type="match status" value="1"/>
</dbReference>
<dbReference type="Gene3D" id="3.20.20.70">
    <property type="entry name" value="Aldolase class I"/>
    <property type="match status" value="1"/>
</dbReference>
<dbReference type="HAMAP" id="MF_00134_B">
    <property type="entry name" value="IGPS_B"/>
    <property type="match status" value="1"/>
</dbReference>
<dbReference type="InterPro" id="IPR013785">
    <property type="entry name" value="Aldolase_TIM"/>
</dbReference>
<dbReference type="InterPro" id="IPR045186">
    <property type="entry name" value="Indole-3-glycerol_P_synth"/>
</dbReference>
<dbReference type="InterPro" id="IPR013798">
    <property type="entry name" value="Indole-3-glycerol_P_synth_dom"/>
</dbReference>
<dbReference type="InterPro" id="IPR001468">
    <property type="entry name" value="Indole-3-GlycerolPSynthase_CS"/>
</dbReference>
<dbReference type="InterPro" id="IPR011060">
    <property type="entry name" value="RibuloseP-bd_barrel"/>
</dbReference>
<dbReference type="NCBIfam" id="NF001371">
    <property type="entry name" value="PRK00278.1-3"/>
    <property type="match status" value="1"/>
</dbReference>
<dbReference type="NCBIfam" id="NF001377">
    <property type="entry name" value="PRK00278.2-4"/>
    <property type="match status" value="1"/>
</dbReference>
<dbReference type="PANTHER" id="PTHR22854:SF2">
    <property type="entry name" value="INDOLE-3-GLYCEROL-PHOSPHATE SYNTHASE"/>
    <property type="match status" value="1"/>
</dbReference>
<dbReference type="PANTHER" id="PTHR22854">
    <property type="entry name" value="TRYPTOPHAN BIOSYNTHESIS PROTEIN"/>
    <property type="match status" value="1"/>
</dbReference>
<dbReference type="Pfam" id="PF00218">
    <property type="entry name" value="IGPS"/>
    <property type="match status" value="1"/>
</dbReference>
<dbReference type="SUPFAM" id="SSF51366">
    <property type="entry name" value="Ribulose-phoshate binding barrel"/>
    <property type="match status" value="1"/>
</dbReference>
<dbReference type="PROSITE" id="PS00614">
    <property type="entry name" value="IGPS"/>
    <property type="match status" value="1"/>
</dbReference>
<sequence>MGTILDKIVNQKKKEVAALYETYTPVKEKRKTRSLVKALEQFTVIAEVKRASPSKGDINLHVDVRKQVKTYEECGAGAVSVLTDGQFFKGSFYDLQTAREESSIPLLCKDFIIDKIQIDRAYEAGADIILLIVAALTKEKLKELYSYVLEKGLEAIVEVHDEQELEIAIQLNPHVIGINNRNLKTFEVDLSQTEKLGKRLNEEKLLWISESGIHSKEDIIRVKRAGAKGVLVGEALMTSSSIHTFFEDCKVNI</sequence>
<feature type="chain" id="PRO_0000154208" description="Indole-3-glycerol phosphate synthase">
    <location>
        <begin position="1"/>
        <end position="253"/>
    </location>
</feature>
<proteinExistence type="inferred from homology"/>
<reference key="1">
    <citation type="journal article" date="2003" name="Nature">
        <title>The genome sequence of Bacillus anthracis Ames and comparison to closely related bacteria.</title>
        <authorList>
            <person name="Read T.D."/>
            <person name="Peterson S.N."/>
            <person name="Tourasse N.J."/>
            <person name="Baillie L.W."/>
            <person name="Paulsen I.T."/>
            <person name="Nelson K.E."/>
            <person name="Tettelin H."/>
            <person name="Fouts D.E."/>
            <person name="Eisen J.A."/>
            <person name="Gill S.R."/>
            <person name="Holtzapple E.K."/>
            <person name="Okstad O.A."/>
            <person name="Helgason E."/>
            <person name="Rilstone J."/>
            <person name="Wu M."/>
            <person name="Kolonay J.F."/>
            <person name="Beanan M.J."/>
            <person name="Dodson R.J."/>
            <person name="Brinkac L.M."/>
            <person name="Gwinn M.L."/>
            <person name="DeBoy R.T."/>
            <person name="Madpu R."/>
            <person name="Daugherty S.C."/>
            <person name="Durkin A.S."/>
            <person name="Haft D.H."/>
            <person name="Nelson W.C."/>
            <person name="Peterson J.D."/>
            <person name="Pop M."/>
            <person name="Khouri H.M."/>
            <person name="Radune D."/>
            <person name="Benton J.L."/>
            <person name="Mahamoud Y."/>
            <person name="Jiang L."/>
            <person name="Hance I.R."/>
            <person name="Weidman J.F."/>
            <person name="Berry K.J."/>
            <person name="Plaut R.D."/>
            <person name="Wolf A.M."/>
            <person name="Watkins K.L."/>
            <person name="Nierman W.C."/>
            <person name="Hazen A."/>
            <person name="Cline R.T."/>
            <person name="Redmond C."/>
            <person name="Thwaite J.E."/>
            <person name="White O."/>
            <person name="Salzberg S.L."/>
            <person name="Thomason B."/>
            <person name="Friedlander A.M."/>
            <person name="Koehler T.M."/>
            <person name="Hanna P.C."/>
            <person name="Kolstoe A.-B."/>
            <person name="Fraser C.M."/>
        </authorList>
    </citation>
    <scope>NUCLEOTIDE SEQUENCE [LARGE SCALE GENOMIC DNA]</scope>
    <source>
        <strain>Ames / isolate Porton</strain>
    </source>
</reference>
<reference key="2">
    <citation type="journal article" date="2009" name="J. Bacteriol.">
        <title>The complete genome sequence of Bacillus anthracis Ames 'Ancestor'.</title>
        <authorList>
            <person name="Ravel J."/>
            <person name="Jiang L."/>
            <person name="Stanley S.T."/>
            <person name="Wilson M.R."/>
            <person name="Decker R.S."/>
            <person name="Read T.D."/>
            <person name="Worsham P."/>
            <person name="Keim P.S."/>
            <person name="Salzberg S.L."/>
            <person name="Fraser-Liggett C.M."/>
            <person name="Rasko D.A."/>
        </authorList>
    </citation>
    <scope>NUCLEOTIDE SEQUENCE [LARGE SCALE GENOMIC DNA]</scope>
    <source>
        <strain>Ames ancestor</strain>
    </source>
</reference>
<reference key="3">
    <citation type="submission" date="2004-01" db="EMBL/GenBank/DDBJ databases">
        <title>Complete genome sequence of Bacillus anthracis Sterne.</title>
        <authorList>
            <person name="Brettin T.S."/>
            <person name="Bruce D."/>
            <person name="Challacombe J.F."/>
            <person name="Gilna P."/>
            <person name="Han C."/>
            <person name="Hill K."/>
            <person name="Hitchcock P."/>
            <person name="Jackson P."/>
            <person name="Keim P."/>
            <person name="Longmire J."/>
            <person name="Lucas S."/>
            <person name="Okinaka R."/>
            <person name="Richardson P."/>
            <person name="Rubin E."/>
            <person name="Tice H."/>
        </authorList>
    </citation>
    <scope>NUCLEOTIDE SEQUENCE [LARGE SCALE GENOMIC DNA]</scope>
    <source>
        <strain>Sterne</strain>
    </source>
</reference>
<name>TRPC_BACAN</name>
<keyword id="KW-0028">Amino-acid biosynthesis</keyword>
<keyword id="KW-0057">Aromatic amino acid biosynthesis</keyword>
<keyword id="KW-0210">Decarboxylase</keyword>
<keyword id="KW-0456">Lyase</keyword>
<keyword id="KW-1185">Reference proteome</keyword>
<keyword id="KW-0822">Tryptophan biosynthesis</keyword>